<reference key="1">
    <citation type="submission" date="2008-02" db="EMBL/GenBank/DDBJ databases">
        <title>Complete sequence of chromosome 1 of Burkholderia cenocepacia MC0-3.</title>
        <authorList>
            <person name="Copeland A."/>
            <person name="Lucas S."/>
            <person name="Lapidus A."/>
            <person name="Barry K."/>
            <person name="Bruce D."/>
            <person name="Goodwin L."/>
            <person name="Glavina del Rio T."/>
            <person name="Dalin E."/>
            <person name="Tice H."/>
            <person name="Pitluck S."/>
            <person name="Chain P."/>
            <person name="Malfatti S."/>
            <person name="Shin M."/>
            <person name="Vergez L."/>
            <person name="Schmutz J."/>
            <person name="Larimer F."/>
            <person name="Land M."/>
            <person name="Hauser L."/>
            <person name="Kyrpides N."/>
            <person name="Mikhailova N."/>
            <person name="Tiedje J."/>
            <person name="Richardson P."/>
        </authorList>
    </citation>
    <scope>NUCLEOTIDE SEQUENCE [LARGE SCALE GENOMIC DNA]</scope>
    <source>
        <strain>MC0-3</strain>
    </source>
</reference>
<protein>
    <recommendedName>
        <fullName evidence="1">Phosphatidylserine decarboxylase proenzyme</fullName>
        <ecNumber evidence="1">4.1.1.65</ecNumber>
    </recommendedName>
    <component>
        <recommendedName>
            <fullName evidence="1">Phosphatidylserine decarboxylase alpha chain</fullName>
        </recommendedName>
    </component>
    <component>
        <recommendedName>
            <fullName evidence="1">Phosphatidylserine decarboxylase beta chain</fullName>
        </recommendedName>
    </component>
</protein>
<evidence type="ECO:0000255" key="1">
    <source>
        <dbReference type="HAMAP-Rule" id="MF_00664"/>
    </source>
</evidence>
<accession>B1JVQ3</accession>
<keyword id="KW-1003">Cell membrane</keyword>
<keyword id="KW-0210">Decarboxylase</keyword>
<keyword id="KW-0444">Lipid biosynthesis</keyword>
<keyword id="KW-0443">Lipid metabolism</keyword>
<keyword id="KW-0456">Lyase</keyword>
<keyword id="KW-0472">Membrane</keyword>
<keyword id="KW-0594">Phospholipid biosynthesis</keyword>
<keyword id="KW-1208">Phospholipid metabolism</keyword>
<keyword id="KW-0670">Pyruvate</keyword>
<keyword id="KW-0865">Zymogen</keyword>
<dbReference type="EC" id="4.1.1.65" evidence="1"/>
<dbReference type="EMBL" id="CP000958">
    <property type="protein sequence ID" value="ACA91446.1"/>
    <property type="molecule type" value="Genomic_DNA"/>
</dbReference>
<dbReference type="RefSeq" id="WP_006478253.1">
    <property type="nucleotide sequence ID" value="NC_010508.1"/>
</dbReference>
<dbReference type="GeneID" id="83049074"/>
<dbReference type="KEGG" id="bcm:Bcenmc03_2285"/>
<dbReference type="HOGENOM" id="CLU_072492_0_0_4"/>
<dbReference type="UniPathway" id="UPA00558">
    <property type="reaction ID" value="UER00616"/>
</dbReference>
<dbReference type="Proteomes" id="UP000002169">
    <property type="component" value="Chromosome 1"/>
</dbReference>
<dbReference type="GO" id="GO:0005886">
    <property type="term" value="C:plasma membrane"/>
    <property type="evidence" value="ECO:0007669"/>
    <property type="project" value="UniProtKB-SubCell"/>
</dbReference>
<dbReference type="GO" id="GO:0004609">
    <property type="term" value="F:phosphatidylserine decarboxylase activity"/>
    <property type="evidence" value="ECO:0007669"/>
    <property type="project" value="UniProtKB-UniRule"/>
</dbReference>
<dbReference type="GO" id="GO:0006646">
    <property type="term" value="P:phosphatidylethanolamine biosynthetic process"/>
    <property type="evidence" value="ECO:0007669"/>
    <property type="project" value="UniProtKB-UniRule"/>
</dbReference>
<dbReference type="HAMAP" id="MF_00664">
    <property type="entry name" value="PS_decarb_PSD_A"/>
    <property type="match status" value="1"/>
</dbReference>
<dbReference type="InterPro" id="IPR003817">
    <property type="entry name" value="PS_Dcarbxylase"/>
</dbReference>
<dbReference type="InterPro" id="IPR033175">
    <property type="entry name" value="PSD-A"/>
</dbReference>
<dbReference type="NCBIfam" id="TIGR00164">
    <property type="entry name" value="AS_decarb"/>
    <property type="match status" value="1"/>
</dbReference>
<dbReference type="NCBIfam" id="NF003678">
    <property type="entry name" value="PRK05305.1-2"/>
    <property type="match status" value="1"/>
</dbReference>
<dbReference type="NCBIfam" id="NF003680">
    <property type="entry name" value="PRK05305.1-5"/>
    <property type="match status" value="1"/>
</dbReference>
<dbReference type="NCBIfam" id="NF003685">
    <property type="entry name" value="PRK05305.2-5"/>
    <property type="match status" value="1"/>
</dbReference>
<dbReference type="PANTHER" id="PTHR35809">
    <property type="entry name" value="ARCHAETIDYLSERINE DECARBOXYLASE PROENZYME-RELATED"/>
    <property type="match status" value="1"/>
</dbReference>
<dbReference type="PANTHER" id="PTHR35809:SF1">
    <property type="entry name" value="ARCHAETIDYLSERINE DECARBOXYLASE PROENZYME-RELATED"/>
    <property type="match status" value="1"/>
</dbReference>
<dbReference type="Pfam" id="PF02666">
    <property type="entry name" value="PS_Dcarbxylase"/>
    <property type="match status" value="1"/>
</dbReference>
<name>PSD_BURO0</name>
<comment type="function">
    <text evidence="1">Catalyzes the formation of phosphatidylethanolamine (PtdEtn) from phosphatidylserine (PtdSer).</text>
</comment>
<comment type="catalytic activity">
    <reaction evidence="1">
        <text>a 1,2-diacyl-sn-glycero-3-phospho-L-serine + H(+) = a 1,2-diacyl-sn-glycero-3-phosphoethanolamine + CO2</text>
        <dbReference type="Rhea" id="RHEA:20828"/>
        <dbReference type="ChEBI" id="CHEBI:15378"/>
        <dbReference type="ChEBI" id="CHEBI:16526"/>
        <dbReference type="ChEBI" id="CHEBI:57262"/>
        <dbReference type="ChEBI" id="CHEBI:64612"/>
        <dbReference type="EC" id="4.1.1.65"/>
    </reaction>
</comment>
<comment type="cofactor">
    <cofactor evidence="1">
        <name>pyruvate</name>
        <dbReference type="ChEBI" id="CHEBI:15361"/>
    </cofactor>
    <text evidence="1">Binds 1 pyruvoyl group covalently per subunit.</text>
</comment>
<comment type="pathway">
    <text evidence="1">Phospholipid metabolism; phosphatidylethanolamine biosynthesis; phosphatidylethanolamine from CDP-diacylglycerol: step 2/2.</text>
</comment>
<comment type="subunit">
    <text evidence="1">Heterodimer of a large membrane-associated beta subunit and a small pyruvoyl-containing alpha subunit.</text>
</comment>
<comment type="subcellular location">
    <subcellularLocation>
        <location evidence="1">Cell membrane</location>
        <topology evidence="1">Peripheral membrane protein</topology>
    </subcellularLocation>
</comment>
<comment type="PTM">
    <text evidence="1">Is synthesized initially as an inactive proenzyme. Formation of the active enzyme involves a self-maturation process in which the active site pyruvoyl group is generated from an internal serine residue via an autocatalytic post-translational modification. Two non-identical subunits are generated from the proenzyme in this reaction, and the pyruvate is formed at the N-terminus of the alpha chain, which is derived from the carboxyl end of the proenzyme. The post-translation cleavage follows an unusual pathway, termed non-hydrolytic serinolysis, in which the side chain hydroxyl group of the serine supplies its oxygen atom to form the C-terminus of the beta chain, while the remainder of the serine residue undergoes an oxidative deamination to produce ammonia and the pyruvoyl prosthetic group on the alpha chain.</text>
</comment>
<comment type="similarity">
    <text evidence="1">Belongs to the phosphatidylserine decarboxylase family. PSD-A subfamily.</text>
</comment>
<gene>
    <name evidence="1" type="primary">psd</name>
    <name type="ordered locus">Bcenmc03_2285</name>
</gene>
<feature type="chain" id="PRO_1000131446" description="Phosphatidylserine decarboxylase beta chain" evidence="1">
    <location>
        <begin position="1"/>
        <end position="181"/>
    </location>
</feature>
<feature type="chain" id="PRO_1000131447" description="Phosphatidylserine decarboxylase alpha chain" evidence="1">
    <location>
        <begin position="182"/>
        <end position="214"/>
    </location>
</feature>
<feature type="active site" description="Schiff-base intermediate with substrate; via pyruvic acid" evidence="1">
    <location>
        <position position="182"/>
    </location>
</feature>
<feature type="site" description="Cleavage (non-hydrolytic); by autocatalysis" evidence="1">
    <location>
        <begin position="181"/>
        <end position="182"/>
    </location>
</feature>
<feature type="modified residue" description="Pyruvic acid (Ser); by autocatalysis" evidence="1">
    <location>
        <position position="182"/>
    </location>
</feature>
<organism>
    <name type="scientific">Burkholderia orbicola (strain MC0-3)</name>
    <dbReference type="NCBI Taxonomy" id="406425"/>
    <lineage>
        <taxon>Bacteria</taxon>
        <taxon>Pseudomonadati</taxon>
        <taxon>Pseudomonadota</taxon>
        <taxon>Betaproteobacteria</taxon>
        <taxon>Burkholderiales</taxon>
        <taxon>Burkholderiaceae</taxon>
        <taxon>Burkholderia</taxon>
        <taxon>Burkholderia cepacia complex</taxon>
        <taxon>Burkholderia orbicola</taxon>
    </lineage>
</organism>
<proteinExistence type="inferred from homology"/>
<sequence>MNYPHPIIAREGWPFIAIAAVVALLIHAVGGFGFAWPFWLLLVFVVQFFRDPQRPIPAQPNAVLCPADGRIVAVETAQDPYANREALKISVFMNVFNVHSQRSPVDGAISKVEYFPGAFLNAAIDKASTENERNAVVIQTASGKTVTSVQIAGLIARRILCYVRAGEPLSRGQRYGFIRFGSRVDVYLPLGSRAKVSIGEKVYASSTILAELEQ</sequence>